<proteinExistence type="evidence at protein level"/>
<accession>P33673</accession>
<protein>
    <recommendedName>
        <fullName>Chitosanase</fullName>
        <ecNumber>3.2.1.132</ecNumber>
    </recommendedName>
</protein>
<organism>
    <name type="scientific">Niallia circulans</name>
    <name type="common">Bacillus circulans</name>
    <dbReference type="NCBI Taxonomy" id="1397"/>
    <lineage>
        <taxon>Bacteria</taxon>
        <taxon>Bacillati</taxon>
        <taxon>Bacillota</taxon>
        <taxon>Bacilli</taxon>
        <taxon>Bacillales</taxon>
        <taxon>Bacillaceae</taxon>
        <taxon>Niallia</taxon>
    </lineage>
</organism>
<comment type="function">
    <text>Aids in the defense against invading fungal pathogens by degrading their cell wall chitosan.</text>
</comment>
<comment type="catalytic activity">
    <reaction>
        <text>Endohydrolysis of beta-(1-&gt;4)-linkages between D-glucosamine residues in a partly acetylated chitosan.</text>
        <dbReference type="EC" id="3.2.1.132"/>
    </reaction>
</comment>
<comment type="subcellular location">
    <subcellularLocation>
        <location>Secreted</location>
    </subcellularLocation>
</comment>
<comment type="similarity">
    <text evidence="3">Belongs to the glycosyl hydrolase 46 family.</text>
</comment>
<evidence type="ECO:0000250" key="1"/>
<evidence type="ECO:0000255" key="2">
    <source>
        <dbReference type="PROSITE-ProRule" id="PRU10070"/>
    </source>
</evidence>
<evidence type="ECO:0000305" key="3"/>
<evidence type="ECO:0007829" key="4">
    <source>
        <dbReference type="PDB" id="1QGI"/>
    </source>
</evidence>
<evidence type="ECO:0007829" key="5">
    <source>
        <dbReference type="PDB" id="5HWA"/>
    </source>
</evidence>
<sequence length="301" mass="33426">MHMSNARPSKSRTKFLLAFLCFTLMASLFGATALFGPSKAAAASPDDNFSPETLQFLRNNTGLDGEQWNNIMKLINKPEQDDLNWIKYYGYCEDIEDERGYTIGLFGATTGGSRDTHPDGPDLFKAYDAAKGASNPSADGALKRLGINGKMKGSILEIKDSEKVFCGKIKKLQNDAAWRKAMWETFYNVYIRYSVEQARQRGFTSAVTIGSFVDTALNQGATGGSDTLQGLLARSGSSSNEKTFMKNFHAKRTLVVDTNKYNKPPNGKNRVKQWDTLVDMGKMNLKNVDSEIAQVTDWEMK</sequence>
<feature type="signal peptide">
    <location>
        <begin position="1"/>
        <end position="42"/>
    </location>
</feature>
<feature type="chain" id="PRO_0000012206" description="Chitosanase">
    <location>
        <begin position="43"/>
        <end position="301"/>
    </location>
</feature>
<feature type="active site" description="Proton donor" evidence="2">
    <location>
        <position position="79"/>
    </location>
</feature>
<feature type="active site" description="Nucleophile" evidence="1">
    <location>
        <position position="97"/>
    </location>
</feature>
<feature type="disulfide bond">
    <location>
        <begin position="92"/>
        <end position="166"/>
    </location>
</feature>
<feature type="helix" evidence="5">
    <location>
        <begin position="45"/>
        <end position="48"/>
    </location>
</feature>
<feature type="helix" evidence="5">
    <location>
        <begin position="51"/>
        <end position="61"/>
    </location>
</feature>
<feature type="helix" evidence="5">
    <location>
        <begin position="65"/>
        <end position="80"/>
    </location>
</feature>
<feature type="strand" evidence="5">
    <location>
        <begin position="81"/>
        <end position="83"/>
    </location>
</feature>
<feature type="helix" evidence="5">
    <location>
        <begin position="85"/>
        <end position="88"/>
    </location>
</feature>
<feature type="strand" evidence="5">
    <location>
        <begin position="96"/>
        <end position="99"/>
    </location>
</feature>
<feature type="turn" evidence="5">
    <location>
        <begin position="104"/>
        <end position="107"/>
    </location>
</feature>
<feature type="strand" evidence="5">
    <location>
        <begin position="115"/>
        <end position="117"/>
    </location>
</feature>
<feature type="helix" evidence="5">
    <location>
        <begin position="120"/>
        <end position="130"/>
    </location>
</feature>
<feature type="helix" evidence="5">
    <location>
        <begin position="138"/>
        <end position="144"/>
    </location>
</feature>
<feature type="strand" evidence="5">
    <location>
        <begin position="149"/>
        <end position="152"/>
    </location>
</feature>
<feature type="strand" evidence="5">
    <location>
        <begin position="155"/>
        <end position="158"/>
    </location>
</feature>
<feature type="helix" evidence="5">
    <location>
        <begin position="162"/>
        <end position="170"/>
    </location>
</feature>
<feature type="turn" evidence="5">
    <location>
        <begin position="171"/>
        <end position="174"/>
    </location>
</feature>
<feature type="helix" evidence="5">
    <location>
        <begin position="176"/>
        <end position="189"/>
    </location>
</feature>
<feature type="helix" evidence="5">
    <location>
        <begin position="191"/>
        <end position="200"/>
    </location>
</feature>
<feature type="helix" evidence="5">
    <location>
        <begin position="206"/>
        <end position="219"/>
    </location>
</feature>
<feature type="strand" evidence="5">
    <location>
        <begin position="221"/>
        <end position="224"/>
    </location>
</feature>
<feature type="helix" evidence="5">
    <location>
        <begin position="228"/>
        <end position="234"/>
    </location>
</feature>
<feature type="helix" evidence="5">
    <location>
        <begin position="241"/>
        <end position="253"/>
    </location>
</feature>
<feature type="turn" evidence="5">
    <location>
        <begin position="254"/>
        <end position="257"/>
    </location>
</feature>
<feature type="turn" evidence="4">
    <location>
        <begin position="259"/>
        <end position="261"/>
    </location>
</feature>
<feature type="helix" evidence="5">
    <location>
        <begin position="266"/>
        <end position="280"/>
    </location>
</feature>
<feature type="helix" evidence="5">
    <location>
        <begin position="289"/>
        <end position="295"/>
    </location>
</feature>
<reference key="1">
    <citation type="journal article" date="1992" name="J. Gen. Appl. Microbiol.">
        <title>Primary structure of chitosanase produced by Bacillus circulans MH-K1.</title>
        <authorList>
            <person name="Ando A."/>
            <person name="Noguchi K."/>
            <person name="Yanagi M."/>
            <person name="Shinoyama H."/>
            <person name="Kagawa Y."/>
            <person name="Hirata H."/>
            <person name="Yabuki M."/>
            <person name="Fujii T."/>
        </authorList>
    </citation>
    <scope>NUCLEOTIDE SEQUENCE [GENOMIC DNA]</scope>
    <scope>PARTIAL PROTEIN SEQUENCE</scope>
    <source>
        <strain>MH-K1</strain>
    </source>
</reference>
<reference key="2">
    <citation type="submission" date="2002-10" db="EMBL/GenBank/DDBJ databases">
        <authorList>
            <person name="Ando A."/>
        </authorList>
    </citation>
    <scope>SEQUENCE REVISION TO 119-124; 140 AND 200-202</scope>
</reference>
<reference key="3">
    <citation type="journal article" date="1999" name="J. Biol. Chem.">
        <title>Crystal structure of chitosanase from Bacillus circulans MH-K1 at 1.6-A resolution and its substrate recognition mechanism.</title>
        <authorList>
            <person name="Saito J."/>
            <person name="Kita A."/>
            <person name="Higuchi Y."/>
            <person name="Nagata Y."/>
            <person name="Ando A."/>
            <person name="Miki K."/>
        </authorList>
    </citation>
    <scope>X-RAY CRYSTALLOGRAPHY (1.6 ANGSTROMS) OF 43-301</scope>
    <source>
        <strain>MH-K1</strain>
    </source>
</reference>
<dbReference type="EC" id="3.2.1.132"/>
<dbReference type="EMBL" id="D10624">
    <property type="protein sequence ID" value="BAA01474.2"/>
    <property type="molecule type" value="Genomic_DNA"/>
</dbReference>
<dbReference type="PDB" id="1QGI">
    <property type="method" value="X-ray"/>
    <property type="resolution" value="1.60 A"/>
    <property type="chains" value="A=43-301"/>
</dbReference>
<dbReference type="PDB" id="2D05">
    <property type="method" value="X-ray"/>
    <property type="resolution" value="2.00 A"/>
    <property type="chains" value="A=43-301"/>
</dbReference>
<dbReference type="PDB" id="5HWA">
    <property type="method" value="X-ray"/>
    <property type="resolution" value="1.35 A"/>
    <property type="chains" value="A=43-301"/>
</dbReference>
<dbReference type="PDBsum" id="1QGI"/>
<dbReference type="PDBsum" id="2D05"/>
<dbReference type="PDBsum" id="5HWA"/>
<dbReference type="SMR" id="P33673"/>
<dbReference type="CAZy" id="GH46">
    <property type="family name" value="Glycoside Hydrolase Family 46"/>
</dbReference>
<dbReference type="KEGG" id="ag:BAA01474"/>
<dbReference type="BioCyc" id="MetaCyc:MONOMER-17652"/>
<dbReference type="BRENDA" id="3.2.1.132">
    <property type="organism ID" value="649"/>
</dbReference>
<dbReference type="EvolutionaryTrace" id="P33673"/>
<dbReference type="GO" id="GO:0005576">
    <property type="term" value="C:extracellular region"/>
    <property type="evidence" value="ECO:0007669"/>
    <property type="project" value="UniProtKB-SubCell"/>
</dbReference>
<dbReference type="GO" id="GO:0016977">
    <property type="term" value="F:chitosanase activity"/>
    <property type="evidence" value="ECO:0007669"/>
    <property type="project" value="UniProtKB-EC"/>
</dbReference>
<dbReference type="GO" id="GO:0005975">
    <property type="term" value="P:carbohydrate metabolic process"/>
    <property type="evidence" value="ECO:0007669"/>
    <property type="project" value="InterPro"/>
</dbReference>
<dbReference type="CDD" id="cd00978">
    <property type="entry name" value="chitosanase_GH46"/>
    <property type="match status" value="1"/>
</dbReference>
<dbReference type="Gene3D" id="1.20.141.10">
    <property type="entry name" value="Chitosanase, subunit A, domain 1"/>
    <property type="match status" value="1"/>
</dbReference>
<dbReference type="Gene3D" id="3.30.386.10">
    <property type="entry name" value="Chitosanase, subunit A, domain 2"/>
    <property type="match status" value="1"/>
</dbReference>
<dbReference type="InterPro" id="IPR000400">
    <property type="entry name" value="Glyco_hydro_46"/>
</dbReference>
<dbReference type="InterPro" id="IPR023099">
    <property type="entry name" value="Glyco_hydro_46_N"/>
</dbReference>
<dbReference type="InterPro" id="IPR023346">
    <property type="entry name" value="Lysozyme-like_dom_sf"/>
</dbReference>
<dbReference type="Pfam" id="PF01374">
    <property type="entry name" value="Glyco_hydro_46"/>
    <property type="match status" value="1"/>
</dbReference>
<dbReference type="PIRSF" id="PIRSF036551">
    <property type="entry name" value="Chitosanase"/>
    <property type="match status" value="1"/>
</dbReference>
<dbReference type="SUPFAM" id="SSF53955">
    <property type="entry name" value="Lysozyme-like"/>
    <property type="match status" value="1"/>
</dbReference>
<dbReference type="PROSITE" id="PS60000">
    <property type="entry name" value="CHITOSANASE_46_80"/>
    <property type="match status" value="1"/>
</dbReference>
<gene>
    <name type="primary">csn</name>
</gene>
<keyword id="KW-0002">3D-structure</keyword>
<keyword id="KW-0903">Direct protein sequencing</keyword>
<keyword id="KW-1015">Disulfide bond</keyword>
<keyword id="KW-0326">Glycosidase</keyword>
<keyword id="KW-0378">Hydrolase</keyword>
<keyword id="KW-0964">Secreted</keyword>
<keyword id="KW-0732">Signal</keyword>
<name>CHIS_NIACI</name>